<organism>
    <name type="scientific">Methanosphaera stadtmanae (strain ATCC 43021 / DSM 3091 / JCM 11832 / MCB-3)</name>
    <dbReference type="NCBI Taxonomy" id="339860"/>
    <lineage>
        <taxon>Archaea</taxon>
        <taxon>Methanobacteriati</taxon>
        <taxon>Methanobacteriota</taxon>
        <taxon>Methanomada group</taxon>
        <taxon>Methanobacteria</taxon>
        <taxon>Methanobacteriales</taxon>
        <taxon>Methanobacteriaceae</taxon>
        <taxon>Methanosphaera</taxon>
    </lineage>
</organism>
<protein>
    <recommendedName>
        <fullName evidence="1">Serine hydroxymethyltransferase</fullName>
        <shortName evidence="1">SHMT</shortName>
        <shortName evidence="1">Serine methylase</shortName>
        <ecNumber evidence="1">2.1.2.-</ecNumber>
    </recommendedName>
</protein>
<sequence>MSNLEQAERIKNLTKDHHNWMKNSLNLIASENITSRAVREAVASDLSHRYAEGLPGERLYEGCDYIDAIEEETIALSKKLYDAEHVNVQPTSGVVANLASFFALTKPGDLLMSINVPEGGHISHASVSAAGIRGLKISSVPMDDSIMNVDIDKTLSKIREKEPKAIVLGGSLFLFPQPVSEVADVAKEVGAKIIYDAAHVLGLIAGKRFQDPVKEGADIVTGSTHKTFPGPQGGIILCKEEIGRKVDNCVFPGVVSNHHLHHMAALGVATAEMLEFGKDYANQTISNAKALAQALYERGFNVLCEDQGFTESHQVAMDVAKLGDVSKMAKTLQYNNIILNKNLLPWDDVNDSDNPSGIRMGTQELTHRGFKEDEMDQVAEFIKQVVMDKKDVKEDVTEFMQDYTTVHYAFDEGCEGYDYIEF</sequence>
<proteinExistence type="inferred from homology"/>
<reference key="1">
    <citation type="journal article" date="2006" name="J. Bacteriol.">
        <title>The genome sequence of Methanosphaera stadtmanae reveals why this human intestinal archaeon is restricted to methanol and H2 for methane formation and ATP synthesis.</title>
        <authorList>
            <person name="Fricke W.F."/>
            <person name="Seedorf H."/>
            <person name="Henne A."/>
            <person name="Kruer M."/>
            <person name="Liesegang H."/>
            <person name="Hedderich R."/>
            <person name="Gottschalk G."/>
            <person name="Thauer R.K."/>
        </authorList>
    </citation>
    <scope>NUCLEOTIDE SEQUENCE [LARGE SCALE GENOMIC DNA]</scope>
    <source>
        <strain>ATCC 43021 / DSM 3091 / JCM 11832 / MCB-3</strain>
    </source>
</reference>
<comment type="function">
    <text evidence="1">Catalyzes the reversible interconversion of serine and glycine with tetrahydromethanopterin (H4MPT) serving as the one-carbon carrier. Also exhibits a pteridine-independent aldolase activity toward beta-hydroxyamino acids, producing glycine and aldehydes, via a retro-aldol mechanism.</text>
</comment>
<comment type="catalytic activity">
    <reaction evidence="1">
        <text>5,10-methylenetetrahydromethanopterin + glycine + H2O = 5,6,7,8-tetrahydromethanopterin + L-serine</text>
        <dbReference type="Rhea" id="RHEA:47104"/>
        <dbReference type="ChEBI" id="CHEBI:15377"/>
        <dbReference type="ChEBI" id="CHEBI:33384"/>
        <dbReference type="ChEBI" id="CHEBI:57305"/>
        <dbReference type="ChEBI" id="CHEBI:57818"/>
        <dbReference type="ChEBI" id="CHEBI:58103"/>
    </reaction>
</comment>
<comment type="cofactor">
    <cofactor evidence="1">
        <name>pyridoxal 5'-phosphate</name>
        <dbReference type="ChEBI" id="CHEBI:597326"/>
    </cofactor>
</comment>
<comment type="pathway">
    <text evidence="1">Amino-acid biosynthesis; glycine biosynthesis; glycine from L-serine: step 1/1.</text>
</comment>
<comment type="subunit">
    <text evidence="1">Homodimer.</text>
</comment>
<comment type="subcellular location">
    <subcellularLocation>
        <location evidence="1">Cytoplasm</location>
    </subcellularLocation>
</comment>
<comment type="similarity">
    <text evidence="1">Belongs to the SHMT family.</text>
</comment>
<gene>
    <name evidence="1" type="primary">glyA</name>
    <name type="ordered locus">Msp_1475</name>
</gene>
<keyword id="KW-0028">Amino-acid biosynthesis</keyword>
<keyword id="KW-0963">Cytoplasm</keyword>
<keyword id="KW-0554">One-carbon metabolism</keyword>
<keyword id="KW-0663">Pyridoxal phosphate</keyword>
<keyword id="KW-1185">Reference proteome</keyword>
<keyword id="KW-0808">Transferase</keyword>
<dbReference type="EC" id="2.1.2.-" evidence="1"/>
<dbReference type="EMBL" id="CP000102">
    <property type="protein sequence ID" value="ABC57845.1"/>
    <property type="molecule type" value="Genomic_DNA"/>
</dbReference>
<dbReference type="RefSeq" id="WP_011407044.1">
    <property type="nucleotide sequence ID" value="NC_007681.1"/>
</dbReference>
<dbReference type="SMR" id="Q2NEA8"/>
<dbReference type="STRING" id="339860.Msp_1475"/>
<dbReference type="GeneID" id="41326048"/>
<dbReference type="KEGG" id="mst:Msp_1475"/>
<dbReference type="eggNOG" id="arCOG00070">
    <property type="taxonomic scope" value="Archaea"/>
</dbReference>
<dbReference type="HOGENOM" id="CLU_022477_2_1_2"/>
<dbReference type="OrthoDB" id="5821at2157"/>
<dbReference type="UniPathway" id="UPA00288">
    <property type="reaction ID" value="UER01023"/>
</dbReference>
<dbReference type="Proteomes" id="UP000001931">
    <property type="component" value="Chromosome"/>
</dbReference>
<dbReference type="GO" id="GO:0005737">
    <property type="term" value="C:cytoplasm"/>
    <property type="evidence" value="ECO:0007669"/>
    <property type="project" value="UniProtKB-SubCell"/>
</dbReference>
<dbReference type="GO" id="GO:0004372">
    <property type="term" value="F:glycine hydroxymethyltransferase activity"/>
    <property type="evidence" value="ECO:0007669"/>
    <property type="project" value="UniProtKB-UniRule"/>
</dbReference>
<dbReference type="GO" id="GO:0030170">
    <property type="term" value="F:pyridoxal phosphate binding"/>
    <property type="evidence" value="ECO:0007669"/>
    <property type="project" value="UniProtKB-UniRule"/>
</dbReference>
<dbReference type="GO" id="GO:0019264">
    <property type="term" value="P:glycine biosynthetic process from serine"/>
    <property type="evidence" value="ECO:0007669"/>
    <property type="project" value="UniProtKB-UniRule"/>
</dbReference>
<dbReference type="GO" id="GO:0035999">
    <property type="term" value="P:tetrahydrofolate interconversion"/>
    <property type="evidence" value="ECO:0007669"/>
    <property type="project" value="InterPro"/>
</dbReference>
<dbReference type="CDD" id="cd00378">
    <property type="entry name" value="SHMT"/>
    <property type="match status" value="1"/>
</dbReference>
<dbReference type="FunFam" id="3.40.640.10:FF:000101">
    <property type="entry name" value="Serine hydroxymethyltransferase"/>
    <property type="match status" value="1"/>
</dbReference>
<dbReference type="Gene3D" id="3.90.1150.10">
    <property type="entry name" value="Aspartate Aminotransferase, domain 1"/>
    <property type="match status" value="1"/>
</dbReference>
<dbReference type="Gene3D" id="3.40.640.10">
    <property type="entry name" value="Type I PLP-dependent aspartate aminotransferase-like (Major domain)"/>
    <property type="match status" value="1"/>
</dbReference>
<dbReference type="HAMAP" id="MF_00051">
    <property type="entry name" value="SHMT"/>
    <property type="match status" value="1"/>
</dbReference>
<dbReference type="InterPro" id="IPR015424">
    <property type="entry name" value="PyrdxlP-dep_Trfase"/>
</dbReference>
<dbReference type="InterPro" id="IPR015421">
    <property type="entry name" value="PyrdxlP-dep_Trfase_major"/>
</dbReference>
<dbReference type="InterPro" id="IPR015422">
    <property type="entry name" value="PyrdxlP-dep_Trfase_small"/>
</dbReference>
<dbReference type="InterPro" id="IPR001085">
    <property type="entry name" value="Ser_HO-MeTrfase"/>
</dbReference>
<dbReference type="InterPro" id="IPR049943">
    <property type="entry name" value="Ser_HO-MeTrfase-like"/>
</dbReference>
<dbReference type="InterPro" id="IPR019798">
    <property type="entry name" value="Ser_HO-MeTrfase_PLP_BS"/>
</dbReference>
<dbReference type="InterPro" id="IPR039429">
    <property type="entry name" value="SHMT-like_dom"/>
</dbReference>
<dbReference type="NCBIfam" id="NF000586">
    <property type="entry name" value="PRK00011.1"/>
    <property type="match status" value="1"/>
</dbReference>
<dbReference type="PANTHER" id="PTHR11680">
    <property type="entry name" value="SERINE HYDROXYMETHYLTRANSFERASE"/>
    <property type="match status" value="1"/>
</dbReference>
<dbReference type="PANTHER" id="PTHR11680:SF35">
    <property type="entry name" value="SERINE HYDROXYMETHYLTRANSFERASE 1"/>
    <property type="match status" value="1"/>
</dbReference>
<dbReference type="Pfam" id="PF00464">
    <property type="entry name" value="SHMT"/>
    <property type="match status" value="1"/>
</dbReference>
<dbReference type="PIRSF" id="PIRSF000412">
    <property type="entry name" value="SHMT"/>
    <property type="match status" value="1"/>
</dbReference>
<dbReference type="SUPFAM" id="SSF53383">
    <property type="entry name" value="PLP-dependent transferases"/>
    <property type="match status" value="1"/>
</dbReference>
<dbReference type="PROSITE" id="PS00096">
    <property type="entry name" value="SHMT"/>
    <property type="match status" value="1"/>
</dbReference>
<evidence type="ECO:0000255" key="1">
    <source>
        <dbReference type="HAMAP-Rule" id="MF_00051"/>
    </source>
</evidence>
<accession>Q2NEA8</accession>
<name>GLYA_METST</name>
<feature type="chain" id="PRO_0000235054" description="Serine hydroxymethyltransferase">
    <location>
        <begin position="1"/>
        <end position="422"/>
    </location>
</feature>
<feature type="binding site" evidence="1">
    <location>
        <begin position="120"/>
        <end position="122"/>
    </location>
    <ligand>
        <name>(6S)-5,6,7,8-tetrahydrofolate</name>
        <dbReference type="ChEBI" id="CHEBI:57453"/>
    </ligand>
</feature>
<feature type="binding site" evidence="1">
    <location>
        <position position="241"/>
    </location>
    <ligand>
        <name>(6S)-5,6,7,8-tetrahydrofolate</name>
        <dbReference type="ChEBI" id="CHEBI:57453"/>
    </ligand>
</feature>
<feature type="site" description="Plays an important role in substrate specificity" evidence="1">
    <location>
        <position position="225"/>
    </location>
</feature>
<feature type="modified residue" description="N6-(pyridoxal phosphate)lysine" evidence="1">
    <location>
        <position position="226"/>
    </location>
</feature>